<proteinExistence type="inferred from homology"/>
<reference key="1">
    <citation type="journal article" date="2002" name="Nature">
        <title>Sequence and analysis of rice chromosome 4.</title>
        <authorList>
            <person name="Feng Q."/>
            <person name="Zhang Y."/>
            <person name="Hao P."/>
            <person name="Wang S."/>
            <person name="Fu G."/>
            <person name="Huang Y."/>
            <person name="Li Y."/>
            <person name="Zhu J."/>
            <person name="Liu Y."/>
            <person name="Hu X."/>
            <person name="Jia P."/>
            <person name="Zhang Y."/>
            <person name="Zhao Q."/>
            <person name="Ying K."/>
            <person name="Yu S."/>
            <person name="Tang Y."/>
            <person name="Weng Q."/>
            <person name="Zhang L."/>
            <person name="Lu Y."/>
            <person name="Mu J."/>
            <person name="Lu Y."/>
            <person name="Zhang L.S."/>
            <person name="Yu Z."/>
            <person name="Fan D."/>
            <person name="Liu X."/>
            <person name="Lu T."/>
            <person name="Li C."/>
            <person name="Wu Y."/>
            <person name="Sun T."/>
            <person name="Lei H."/>
            <person name="Li T."/>
            <person name="Hu H."/>
            <person name="Guan J."/>
            <person name="Wu M."/>
            <person name="Zhang R."/>
            <person name="Zhou B."/>
            <person name="Chen Z."/>
            <person name="Chen L."/>
            <person name="Jin Z."/>
            <person name="Wang R."/>
            <person name="Yin H."/>
            <person name="Cai Z."/>
            <person name="Ren S."/>
            <person name="Lv G."/>
            <person name="Gu W."/>
            <person name="Zhu G."/>
            <person name="Tu Y."/>
            <person name="Jia J."/>
            <person name="Zhang Y."/>
            <person name="Chen J."/>
            <person name="Kang H."/>
            <person name="Chen X."/>
            <person name="Shao C."/>
            <person name="Sun Y."/>
            <person name="Hu Q."/>
            <person name="Zhang X."/>
            <person name="Zhang W."/>
            <person name="Wang L."/>
            <person name="Ding C."/>
            <person name="Sheng H."/>
            <person name="Gu J."/>
            <person name="Chen S."/>
            <person name="Ni L."/>
            <person name="Zhu F."/>
            <person name="Chen W."/>
            <person name="Lan L."/>
            <person name="Lai Y."/>
            <person name="Cheng Z."/>
            <person name="Gu M."/>
            <person name="Jiang J."/>
            <person name="Li J."/>
            <person name="Hong G."/>
            <person name="Xue Y."/>
            <person name="Han B."/>
        </authorList>
    </citation>
    <scope>NUCLEOTIDE SEQUENCE [LARGE SCALE GENOMIC DNA]</scope>
    <source>
        <strain>cv. Guang-Lu-Ai No.4</strain>
    </source>
</reference>
<reference key="2">
    <citation type="journal article" date="2005" name="PLoS Biol.">
        <title>The genomes of Oryza sativa: a history of duplications.</title>
        <authorList>
            <person name="Yu J."/>
            <person name="Wang J."/>
            <person name="Lin W."/>
            <person name="Li S."/>
            <person name="Li H."/>
            <person name="Zhou J."/>
            <person name="Ni P."/>
            <person name="Dong W."/>
            <person name="Hu S."/>
            <person name="Zeng C."/>
            <person name="Zhang J."/>
            <person name="Zhang Y."/>
            <person name="Li R."/>
            <person name="Xu Z."/>
            <person name="Li S."/>
            <person name="Li X."/>
            <person name="Zheng H."/>
            <person name="Cong L."/>
            <person name="Lin L."/>
            <person name="Yin J."/>
            <person name="Geng J."/>
            <person name="Li G."/>
            <person name="Shi J."/>
            <person name="Liu J."/>
            <person name="Lv H."/>
            <person name="Li J."/>
            <person name="Wang J."/>
            <person name="Deng Y."/>
            <person name="Ran L."/>
            <person name="Shi X."/>
            <person name="Wang X."/>
            <person name="Wu Q."/>
            <person name="Li C."/>
            <person name="Ren X."/>
            <person name="Wang J."/>
            <person name="Wang X."/>
            <person name="Li D."/>
            <person name="Liu D."/>
            <person name="Zhang X."/>
            <person name="Ji Z."/>
            <person name="Zhao W."/>
            <person name="Sun Y."/>
            <person name="Zhang Z."/>
            <person name="Bao J."/>
            <person name="Han Y."/>
            <person name="Dong L."/>
            <person name="Ji J."/>
            <person name="Chen P."/>
            <person name="Wu S."/>
            <person name="Liu J."/>
            <person name="Xiao Y."/>
            <person name="Bu D."/>
            <person name="Tan J."/>
            <person name="Yang L."/>
            <person name="Ye C."/>
            <person name="Zhang J."/>
            <person name="Xu J."/>
            <person name="Zhou Y."/>
            <person name="Yu Y."/>
            <person name="Zhang B."/>
            <person name="Zhuang S."/>
            <person name="Wei H."/>
            <person name="Liu B."/>
            <person name="Lei M."/>
            <person name="Yu H."/>
            <person name="Li Y."/>
            <person name="Xu H."/>
            <person name="Wei S."/>
            <person name="He X."/>
            <person name="Fang L."/>
            <person name="Zhang Z."/>
            <person name="Zhang Y."/>
            <person name="Huang X."/>
            <person name="Su Z."/>
            <person name="Tong W."/>
            <person name="Li J."/>
            <person name="Tong Z."/>
            <person name="Li S."/>
            <person name="Ye J."/>
            <person name="Wang L."/>
            <person name="Fang L."/>
            <person name="Lei T."/>
            <person name="Chen C.-S."/>
            <person name="Chen H.-C."/>
            <person name="Xu Z."/>
            <person name="Li H."/>
            <person name="Huang H."/>
            <person name="Zhang F."/>
            <person name="Xu H."/>
            <person name="Li N."/>
            <person name="Zhao C."/>
            <person name="Li S."/>
            <person name="Dong L."/>
            <person name="Huang Y."/>
            <person name="Li L."/>
            <person name="Xi Y."/>
            <person name="Qi Q."/>
            <person name="Li W."/>
            <person name="Zhang B."/>
            <person name="Hu W."/>
            <person name="Zhang Y."/>
            <person name="Tian X."/>
            <person name="Jiao Y."/>
            <person name="Liang X."/>
            <person name="Jin J."/>
            <person name="Gao L."/>
            <person name="Zheng W."/>
            <person name="Hao B."/>
            <person name="Liu S.-M."/>
            <person name="Wang W."/>
            <person name="Yuan L."/>
            <person name="Cao M."/>
            <person name="McDermott J."/>
            <person name="Samudrala R."/>
            <person name="Wang J."/>
            <person name="Wong G.K.-S."/>
            <person name="Yang H."/>
        </authorList>
    </citation>
    <scope>NUCLEOTIDE SEQUENCE [LARGE SCALE GENOMIC DNA]</scope>
    <source>
        <strain>cv. 93-11</strain>
    </source>
</reference>
<evidence type="ECO:0000250" key="1"/>
<evidence type="ECO:0000255" key="2"/>
<evidence type="ECO:0000305" key="3"/>
<protein>
    <recommendedName>
        <fullName>Probable gamma-aminobutyrate transaminase 2, mitochondrial</fullName>
        <ecNumber>2.6.1.96</ecNumber>
    </recommendedName>
</protein>
<sequence length="497" mass="54019">MNLIKHAAFAASFQGETDCTSHASARKFSTSGSSPLLDSTEGNGFKGHSMLAPFTAGWHSTDLEPLIIERSEGSYVYDSKGNKYLDTLAGLWCTALGGSEPRLVKAATDQLNKLPFYHSFWNSTAKPPLDLAEELISMFTAKEMGKVFFTNSGSEANDSQVKLVWYYNNALGRPNKKKIIAQSQAYHGSTLISASLSGLPAMHLKFDLPAPFVLHTDCPHYWRFGLPGEAEEEFATRLADNLENLILKEGPETVAAFIAEPVIGAGGVIPPPKTYFEKIQAVLQKYDVLFIADEVITGFGRLGTMFGSDLYNIKPDLVSLAKALSSAYVPIGATLVSPEISDVVHSQSNKIGFFAHGFTYSGHPVSCAVALEALKIYRERNIPAHVKQISPRFQEGIKAFAGSSIIGETRGVGLLLATEFANNKSPNDPFPVEWGVAQIFGAECKKRGMLVKVVGDEIAMSPPLIMSQREVDGLVSIYGEALKATEERVAELRSKKK</sequence>
<keyword id="KW-0032">Aminotransferase</keyword>
<keyword id="KW-0496">Mitochondrion</keyword>
<keyword id="KW-0663">Pyridoxal phosphate</keyword>
<keyword id="KW-1185">Reference proteome</keyword>
<keyword id="KW-0808">Transferase</keyword>
<keyword id="KW-0809">Transit peptide</keyword>
<gene>
    <name type="ORF">OsI_17384</name>
    <name type="ORF">OSIGBa0126B18.6</name>
</gene>
<accession>Q01K12</accession>
<accession>B8AU58</accession>
<organism>
    <name type="scientific">Oryza sativa subsp. indica</name>
    <name type="common">Rice</name>
    <dbReference type="NCBI Taxonomy" id="39946"/>
    <lineage>
        <taxon>Eukaryota</taxon>
        <taxon>Viridiplantae</taxon>
        <taxon>Streptophyta</taxon>
        <taxon>Embryophyta</taxon>
        <taxon>Tracheophyta</taxon>
        <taxon>Spermatophyta</taxon>
        <taxon>Magnoliopsida</taxon>
        <taxon>Liliopsida</taxon>
        <taxon>Poales</taxon>
        <taxon>Poaceae</taxon>
        <taxon>BOP clade</taxon>
        <taxon>Oryzoideae</taxon>
        <taxon>Oryzeae</taxon>
        <taxon>Oryzinae</taxon>
        <taxon>Oryza</taxon>
        <taxon>Oryza sativa</taxon>
    </lineage>
</organism>
<dbReference type="EC" id="2.6.1.96"/>
<dbReference type="EMBL" id="CR855154">
    <property type="protein sequence ID" value="CAH66913.1"/>
    <property type="molecule type" value="Genomic_DNA"/>
</dbReference>
<dbReference type="EMBL" id="CM000129">
    <property type="protein sequence ID" value="EEC77994.1"/>
    <property type="status" value="ALT_SEQ"/>
    <property type="molecule type" value="Genomic_DNA"/>
</dbReference>
<dbReference type="SMR" id="Q01K12"/>
<dbReference type="STRING" id="39946.Q01K12"/>
<dbReference type="Proteomes" id="UP000007015">
    <property type="component" value="Chromosome 4"/>
</dbReference>
<dbReference type="GO" id="GO:0005739">
    <property type="term" value="C:mitochondrion"/>
    <property type="evidence" value="ECO:0007669"/>
    <property type="project" value="UniProtKB-SubCell"/>
</dbReference>
<dbReference type="GO" id="GO:0034387">
    <property type="term" value="F:4-aminobutyrate:pyruvate transaminase activity"/>
    <property type="evidence" value="ECO:0007669"/>
    <property type="project" value="UniProtKB-EC"/>
</dbReference>
<dbReference type="GO" id="GO:0004015">
    <property type="term" value="F:adenosylmethionine-8-amino-7-oxononanoate transaminase activity"/>
    <property type="evidence" value="ECO:0007669"/>
    <property type="project" value="TreeGrafter"/>
</dbReference>
<dbReference type="GO" id="GO:0030170">
    <property type="term" value="F:pyridoxal phosphate binding"/>
    <property type="evidence" value="ECO:0007669"/>
    <property type="project" value="InterPro"/>
</dbReference>
<dbReference type="GO" id="GO:0009102">
    <property type="term" value="P:biotin biosynthetic process"/>
    <property type="evidence" value="ECO:0007669"/>
    <property type="project" value="TreeGrafter"/>
</dbReference>
<dbReference type="GO" id="GO:0009448">
    <property type="term" value="P:gamma-aminobutyric acid metabolic process"/>
    <property type="evidence" value="ECO:0007669"/>
    <property type="project" value="TreeGrafter"/>
</dbReference>
<dbReference type="CDD" id="cd00610">
    <property type="entry name" value="OAT_like"/>
    <property type="match status" value="1"/>
</dbReference>
<dbReference type="FunFam" id="3.40.640.10:FF:000014">
    <property type="entry name" value="Adenosylmethionine-8-amino-7-oxononanoate aminotransferase, probable"/>
    <property type="match status" value="1"/>
</dbReference>
<dbReference type="Gene3D" id="3.90.1150.10">
    <property type="entry name" value="Aspartate Aminotransferase, domain 1"/>
    <property type="match status" value="1"/>
</dbReference>
<dbReference type="Gene3D" id="3.40.640.10">
    <property type="entry name" value="Type I PLP-dependent aspartate aminotransferase-like (Major domain)"/>
    <property type="match status" value="1"/>
</dbReference>
<dbReference type="InterPro" id="IPR005814">
    <property type="entry name" value="Aminotrans_3"/>
</dbReference>
<dbReference type="InterPro" id="IPR049704">
    <property type="entry name" value="Aminotrans_3_PPA_site"/>
</dbReference>
<dbReference type="InterPro" id="IPR015424">
    <property type="entry name" value="PyrdxlP-dep_Trfase"/>
</dbReference>
<dbReference type="InterPro" id="IPR015421">
    <property type="entry name" value="PyrdxlP-dep_Trfase_major"/>
</dbReference>
<dbReference type="InterPro" id="IPR015422">
    <property type="entry name" value="PyrdxlP-dep_Trfase_small"/>
</dbReference>
<dbReference type="NCBIfam" id="NF004767">
    <property type="entry name" value="PRK06105.1"/>
    <property type="match status" value="1"/>
</dbReference>
<dbReference type="PANTHER" id="PTHR42684">
    <property type="entry name" value="ADENOSYLMETHIONINE-8-AMINO-7-OXONONANOATE AMINOTRANSFERASE"/>
    <property type="match status" value="1"/>
</dbReference>
<dbReference type="PANTHER" id="PTHR42684:SF20">
    <property type="entry name" value="GAMMA-AMINOBUTYRATE TRANSAMINASE 1, MITOCHONDRIAL"/>
    <property type="match status" value="1"/>
</dbReference>
<dbReference type="Pfam" id="PF00202">
    <property type="entry name" value="Aminotran_3"/>
    <property type="match status" value="1"/>
</dbReference>
<dbReference type="PIRSF" id="PIRSF000521">
    <property type="entry name" value="Transaminase_4ab_Lys_Orn"/>
    <property type="match status" value="1"/>
</dbReference>
<dbReference type="SUPFAM" id="SSF53383">
    <property type="entry name" value="PLP-dependent transferases"/>
    <property type="match status" value="1"/>
</dbReference>
<dbReference type="PROSITE" id="PS00600">
    <property type="entry name" value="AA_TRANSFER_CLASS_3"/>
    <property type="match status" value="1"/>
</dbReference>
<name>GATP2_ORYSI</name>
<feature type="transit peptide" description="Mitochondrion" evidence="2">
    <location>
        <begin position="1"/>
        <end position="37"/>
    </location>
</feature>
<feature type="chain" id="PRO_0000416851" description="Probable gamma-aminobutyrate transaminase 2, mitochondrial">
    <location>
        <begin position="38"/>
        <end position="497"/>
    </location>
</feature>
<feature type="binding site" evidence="1">
    <location>
        <begin position="153"/>
        <end position="154"/>
    </location>
    <ligand>
        <name>pyridoxal 5'-phosphate</name>
        <dbReference type="ChEBI" id="CHEBI:597326"/>
    </ligand>
</feature>
<feature type="binding site" evidence="1">
    <location>
        <position position="186"/>
    </location>
    <ligand>
        <name>substrate</name>
    </ligand>
</feature>
<feature type="binding site" evidence="1">
    <location>
        <position position="293"/>
    </location>
    <ligand>
        <name>pyridoxal 5'-phosphate</name>
        <dbReference type="ChEBI" id="CHEBI:597326"/>
    </ligand>
</feature>
<feature type="binding site" evidence="1">
    <location>
        <position position="322"/>
    </location>
    <ligand>
        <name>substrate</name>
    </ligand>
</feature>
<feature type="modified residue" description="N6-(pyridoxal phosphate)lysine" evidence="1">
    <location>
        <position position="322"/>
    </location>
</feature>
<comment type="function">
    <text evidence="1">Transaminase that degrades gamma-amino butyric acid (GABA).</text>
</comment>
<comment type="catalytic activity">
    <reaction>
        <text>4-aminobutanoate + pyruvate = succinate semialdehyde + L-alanine</text>
        <dbReference type="Rhea" id="RHEA:32263"/>
        <dbReference type="ChEBI" id="CHEBI:15361"/>
        <dbReference type="ChEBI" id="CHEBI:57706"/>
        <dbReference type="ChEBI" id="CHEBI:57972"/>
        <dbReference type="ChEBI" id="CHEBI:59888"/>
        <dbReference type="EC" id="2.6.1.96"/>
    </reaction>
</comment>
<comment type="catalytic activity">
    <reaction>
        <text>4-aminobutanoate + glyoxylate = succinate semialdehyde + glycine</text>
        <dbReference type="Rhea" id="RHEA:32267"/>
        <dbReference type="ChEBI" id="CHEBI:36655"/>
        <dbReference type="ChEBI" id="CHEBI:57305"/>
        <dbReference type="ChEBI" id="CHEBI:57706"/>
        <dbReference type="ChEBI" id="CHEBI:59888"/>
        <dbReference type="EC" id="2.6.1.96"/>
    </reaction>
</comment>
<comment type="subcellular location">
    <subcellularLocation>
        <location evidence="3">Mitochondrion</location>
    </subcellularLocation>
</comment>
<comment type="similarity">
    <text evidence="3">Belongs to the class-III pyridoxal-phosphate-dependent aminotransferase family.</text>
</comment>
<comment type="sequence caution" evidence="3">
    <conflict type="erroneous gene model prediction">
        <sequence resource="EMBL-CDS" id="EEC77994"/>
    </conflict>
</comment>